<gene>
    <name type="primary">MARCKSL1</name>
    <name type="synonym">MLP</name>
    <name type="synonym">MRP</name>
</gene>
<name>MRP_HUMAN</name>
<evidence type="ECO:0000250" key="1"/>
<evidence type="ECO:0000250" key="2">
    <source>
        <dbReference type="UniProtKB" id="P28667"/>
    </source>
</evidence>
<evidence type="ECO:0000256" key="3">
    <source>
        <dbReference type="SAM" id="MobiDB-lite"/>
    </source>
</evidence>
<evidence type="ECO:0000269" key="4">
    <source>
    </source>
</evidence>
<evidence type="ECO:0000269" key="5">
    <source>
    </source>
</evidence>
<evidence type="ECO:0000305" key="6"/>
<evidence type="ECO:0000305" key="7">
    <source>
    </source>
</evidence>
<evidence type="ECO:0000305" key="8">
    <source>
    </source>
</evidence>
<evidence type="ECO:0007744" key="9">
    <source>
    </source>
</evidence>
<evidence type="ECO:0007744" key="10">
    <source>
    </source>
</evidence>
<evidence type="ECO:0007744" key="11">
    <source>
    </source>
</evidence>
<evidence type="ECO:0007744" key="12">
    <source>
    </source>
</evidence>
<evidence type="ECO:0007744" key="13">
    <source>
    </source>
</evidence>
<evidence type="ECO:0007744" key="14">
    <source>
    </source>
</evidence>
<evidence type="ECO:0007744" key="15">
    <source>
    </source>
</evidence>
<evidence type="ECO:0007744" key="16">
    <source>
    </source>
</evidence>
<accession>P49006</accession>
<accession>D3DPQ0</accession>
<accession>Q5TEE6</accession>
<accession>Q6NXS5</accession>
<reference key="1">
    <citation type="submission" date="1993-02" db="EMBL/GenBank/DDBJ databases">
        <title>cDNA and derived amino acid sequence of human maeMARCKS an LPS-inducible macrophage PKC substrate.</title>
        <authorList>
            <person name="Blockx H."/>
            <person name="Maertebs C."/>
            <person name="Fransen L.M.L."/>
        </authorList>
    </citation>
    <scope>NUCLEOTIDE SEQUENCE [MRNA]</scope>
</reference>
<reference key="2">
    <citation type="journal article" date="2007" name="BMC Genomics">
        <title>The full-ORF clone resource of the German cDNA consortium.</title>
        <authorList>
            <person name="Bechtel S."/>
            <person name="Rosenfelder H."/>
            <person name="Duda A."/>
            <person name="Schmidt C.P."/>
            <person name="Ernst U."/>
            <person name="Wellenreuther R."/>
            <person name="Mehrle A."/>
            <person name="Schuster C."/>
            <person name="Bahr A."/>
            <person name="Bloecker H."/>
            <person name="Heubner D."/>
            <person name="Hoerlein A."/>
            <person name="Michel G."/>
            <person name="Wedler H."/>
            <person name="Koehrer K."/>
            <person name="Ottenwaelder B."/>
            <person name="Poustka A."/>
            <person name="Wiemann S."/>
            <person name="Schupp I."/>
        </authorList>
    </citation>
    <scope>NUCLEOTIDE SEQUENCE [LARGE SCALE MRNA]</scope>
    <source>
        <tissue>Brain</tissue>
    </source>
</reference>
<reference key="3">
    <citation type="submission" date="2003-05" db="EMBL/GenBank/DDBJ databases">
        <authorList>
            <consortium name="NIEHS SNPs program"/>
        </authorList>
    </citation>
    <scope>NUCLEOTIDE SEQUENCE [GENOMIC DNA]</scope>
</reference>
<reference key="4">
    <citation type="journal article" date="2006" name="Nature">
        <title>The DNA sequence and biological annotation of human chromosome 1.</title>
        <authorList>
            <person name="Gregory S.G."/>
            <person name="Barlow K.F."/>
            <person name="McLay K.E."/>
            <person name="Kaul R."/>
            <person name="Swarbreck D."/>
            <person name="Dunham A."/>
            <person name="Scott C.E."/>
            <person name="Howe K.L."/>
            <person name="Woodfine K."/>
            <person name="Spencer C.C.A."/>
            <person name="Jones M.C."/>
            <person name="Gillson C."/>
            <person name="Searle S."/>
            <person name="Zhou Y."/>
            <person name="Kokocinski F."/>
            <person name="McDonald L."/>
            <person name="Evans R."/>
            <person name="Phillips K."/>
            <person name="Atkinson A."/>
            <person name="Cooper R."/>
            <person name="Jones C."/>
            <person name="Hall R.E."/>
            <person name="Andrews T.D."/>
            <person name="Lloyd C."/>
            <person name="Ainscough R."/>
            <person name="Almeida J.P."/>
            <person name="Ambrose K.D."/>
            <person name="Anderson F."/>
            <person name="Andrew R.W."/>
            <person name="Ashwell R.I.S."/>
            <person name="Aubin K."/>
            <person name="Babbage A.K."/>
            <person name="Bagguley C.L."/>
            <person name="Bailey J."/>
            <person name="Beasley H."/>
            <person name="Bethel G."/>
            <person name="Bird C.P."/>
            <person name="Bray-Allen S."/>
            <person name="Brown J.Y."/>
            <person name="Brown A.J."/>
            <person name="Buckley D."/>
            <person name="Burton J."/>
            <person name="Bye J."/>
            <person name="Carder C."/>
            <person name="Chapman J.C."/>
            <person name="Clark S.Y."/>
            <person name="Clarke G."/>
            <person name="Clee C."/>
            <person name="Cobley V."/>
            <person name="Collier R.E."/>
            <person name="Corby N."/>
            <person name="Coville G.J."/>
            <person name="Davies J."/>
            <person name="Deadman R."/>
            <person name="Dunn M."/>
            <person name="Earthrowl M."/>
            <person name="Ellington A.G."/>
            <person name="Errington H."/>
            <person name="Frankish A."/>
            <person name="Frankland J."/>
            <person name="French L."/>
            <person name="Garner P."/>
            <person name="Garnett J."/>
            <person name="Gay L."/>
            <person name="Ghori M.R.J."/>
            <person name="Gibson R."/>
            <person name="Gilby L.M."/>
            <person name="Gillett W."/>
            <person name="Glithero R.J."/>
            <person name="Grafham D.V."/>
            <person name="Griffiths C."/>
            <person name="Griffiths-Jones S."/>
            <person name="Grocock R."/>
            <person name="Hammond S."/>
            <person name="Harrison E.S.I."/>
            <person name="Hart E."/>
            <person name="Haugen E."/>
            <person name="Heath P.D."/>
            <person name="Holmes S."/>
            <person name="Holt K."/>
            <person name="Howden P.J."/>
            <person name="Hunt A.R."/>
            <person name="Hunt S.E."/>
            <person name="Hunter G."/>
            <person name="Isherwood J."/>
            <person name="James R."/>
            <person name="Johnson C."/>
            <person name="Johnson D."/>
            <person name="Joy A."/>
            <person name="Kay M."/>
            <person name="Kershaw J.K."/>
            <person name="Kibukawa M."/>
            <person name="Kimberley A.M."/>
            <person name="King A."/>
            <person name="Knights A.J."/>
            <person name="Lad H."/>
            <person name="Laird G."/>
            <person name="Lawlor S."/>
            <person name="Leongamornlert D.A."/>
            <person name="Lloyd D.M."/>
            <person name="Loveland J."/>
            <person name="Lovell J."/>
            <person name="Lush M.J."/>
            <person name="Lyne R."/>
            <person name="Martin S."/>
            <person name="Mashreghi-Mohammadi M."/>
            <person name="Matthews L."/>
            <person name="Matthews N.S.W."/>
            <person name="McLaren S."/>
            <person name="Milne S."/>
            <person name="Mistry S."/>
            <person name="Moore M.J.F."/>
            <person name="Nickerson T."/>
            <person name="O'Dell C.N."/>
            <person name="Oliver K."/>
            <person name="Palmeiri A."/>
            <person name="Palmer S.A."/>
            <person name="Parker A."/>
            <person name="Patel D."/>
            <person name="Pearce A.V."/>
            <person name="Peck A.I."/>
            <person name="Pelan S."/>
            <person name="Phelps K."/>
            <person name="Phillimore B.J."/>
            <person name="Plumb R."/>
            <person name="Rajan J."/>
            <person name="Raymond C."/>
            <person name="Rouse G."/>
            <person name="Saenphimmachak C."/>
            <person name="Sehra H.K."/>
            <person name="Sheridan E."/>
            <person name="Shownkeen R."/>
            <person name="Sims S."/>
            <person name="Skuce C.D."/>
            <person name="Smith M."/>
            <person name="Steward C."/>
            <person name="Subramanian S."/>
            <person name="Sycamore N."/>
            <person name="Tracey A."/>
            <person name="Tromans A."/>
            <person name="Van Helmond Z."/>
            <person name="Wall M."/>
            <person name="Wallis J.M."/>
            <person name="White S."/>
            <person name="Whitehead S.L."/>
            <person name="Wilkinson J.E."/>
            <person name="Willey D.L."/>
            <person name="Williams H."/>
            <person name="Wilming L."/>
            <person name="Wray P.W."/>
            <person name="Wu Z."/>
            <person name="Coulson A."/>
            <person name="Vaudin M."/>
            <person name="Sulston J.E."/>
            <person name="Durbin R.M."/>
            <person name="Hubbard T."/>
            <person name="Wooster R."/>
            <person name="Dunham I."/>
            <person name="Carter N.P."/>
            <person name="McVean G."/>
            <person name="Ross M.T."/>
            <person name="Harrow J."/>
            <person name="Olson M.V."/>
            <person name="Beck S."/>
            <person name="Rogers J."/>
            <person name="Bentley D.R."/>
        </authorList>
    </citation>
    <scope>NUCLEOTIDE SEQUENCE [LARGE SCALE GENOMIC DNA]</scope>
</reference>
<reference key="5">
    <citation type="submission" date="2005-09" db="EMBL/GenBank/DDBJ databases">
        <authorList>
            <person name="Mural R.J."/>
            <person name="Istrail S."/>
            <person name="Sutton G.G."/>
            <person name="Florea L."/>
            <person name="Halpern A.L."/>
            <person name="Mobarry C.M."/>
            <person name="Lippert R."/>
            <person name="Walenz B."/>
            <person name="Shatkay H."/>
            <person name="Dew I."/>
            <person name="Miller J.R."/>
            <person name="Flanigan M.J."/>
            <person name="Edwards N.J."/>
            <person name="Bolanos R."/>
            <person name="Fasulo D."/>
            <person name="Halldorsson B.V."/>
            <person name="Hannenhalli S."/>
            <person name="Turner R."/>
            <person name="Yooseph S."/>
            <person name="Lu F."/>
            <person name="Nusskern D.R."/>
            <person name="Shue B.C."/>
            <person name="Zheng X.H."/>
            <person name="Zhong F."/>
            <person name="Delcher A.L."/>
            <person name="Huson D.H."/>
            <person name="Kravitz S.A."/>
            <person name="Mouchard L."/>
            <person name="Reinert K."/>
            <person name="Remington K.A."/>
            <person name="Clark A.G."/>
            <person name="Waterman M.S."/>
            <person name="Eichler E.E."/>
            <person name="Adams M.D."/>
            <person name="Hunkapiller M.W."/>
            <person name="Myers E.W."/>
            <person name="Venter J.C."/>
        </authorList>
    </citation>
    <scope>NUCLEOTIDE SEQUENCE [LARGE SCALE GENOMIC DNA]</scope>
</reference>
<reference key="6">
    <citation type="journal article" date="2004" name="Genome Res.">
        <title>The status, quality, and expansion of the NIH full-length cDNA project: the Mammalian Gene Collection (MGC).</title>
        <authorList>
            <consortium name="The MGC Project Team"/>
        </authorList>
    </citation>
    <scope>NUCLEOTIDE SEQUENCE [LARGE SCALE MRNA]</scope>
    <source>
        <tissue>Brain</tissue>
        <tissue>Muscle</tissue>
    </source>
</reference>
<reference key="7">
    <citation type="journal article" date="2006" name="Cell">
        <title>Global, in vivo, and site-specific phosphorylation dynamics in signaling networks.</title>
        <authorList>
            <person name="Olsen J.V."/>
            <person name="Blagoev B."/>
            <person name="Gnad F."/>
            <person name="Macek B."/>
            <person name="Kumar C."/>
            <person name="Mortensen P."/>
            <person name="Mann M."/>
        </authorList>
    </citation>
    <scope>PHOSPHORYLATION [LARGE SCALE ANALYSIS] AT SER-22</scope>
    <scope>IDENTIFICATION BY MASS SPECTROMETRY [LARGE SCALE ANALYSIS]</scope>
    <source>
        <tissue>Cervix carcinoma</tissue>
    </source>
</reference>
<reference key="8">
    <citation type="journal article" date="2007" name="Science">
        <title>ATM and ATR substrate analysis reveals extensive protein networks responsive to DNA damage.</title>
        <authorList>
            <person name="Matsuoka S."/>
            <person name="Ballif B.A."/>
            <person name="Smogorzewska A."/>
            <person name="McDonald E.R. III"/>
            <person name="Hurov K.E."/>
            <person name="Luo J."/>
            <person name="Bakalarski C.E."/>
            <person name="Zhao Z."/>
            <person name="Solimini N."/>
            <person name="Lerenthal Y."/>
            <person name="Shiloh Y."/>
            <person name="Gygi S.P."/>
            <person name="Elledge S.J."/>
        </authorList>
    </citation>
    <scope>PHOSPHORYLATION [LARGE SCALE ANALYSIS] AT SER-71</scope>
    <scope>IDENTIFICATION BY MASS SPECTROMETRY [LARGE SCALE ANALYSIS]</scope>
    <source>
        <tissue>Embryonic kidney</tissue>
    </source>
</reference>
<reference key="9">
    <citation type="journal article" date="2008" name="Proc. Natl. Acad. Sci. U.S.A.">
        <title>A quantitative atlas of mitotic phosphorylation.</title>
        <authorList>
            <person name="Dephoure N."/>
            <person name="Zhou C."/>
            <person name="Villen J."/>
            <person name="Beausoleil S.A."/>
            <person name="Bakalarski C.E."/>
            <person name="Elledge S.J."/>
            <person name="Gygi S.P."/>
        </authorList>
    </citation>
    <scope>PHOSPHORYLATION [LARGE SCALE ANALYSIS] AT SER-22; THR-148 AND THR-178</scope>
    <scope>IDENTIFICATION BY MASS SPECTROMETRY [LARGE SCALE ANALYSIS]</scope>
    <source>
        <tissue>Cervix carcinoma</tissue>
    </source>
</reference>
<reference key="10">
    <citation type="journal article" date="2009" name="Anal. Chem.">
        <title>Lys-N and trypsin cover complementary parts of the phosphoproteome in a refined SCX-based approach.</title>
        <authorList>
            <person name="Gauci S."/>
            <person name="Helbig A.O."/>
            <person name="Slijper M."/>
            <person name="Krijgsveld J."/>
            <person name="Heck A.J."/>
            <person name="Mohammed S."/>
        </authorList>
    </citation>
    <scope>IDENTIFICATION BY MASS SPECTROMETRY [LARGE SCALE ANALYSIS]</scope>
</reference>
<reference key="11">
    <citation type="journal article" date="2009" name="Sci. Signal.">
        <title>Quantitative phosphoproteomic analysis of T cell receptor signaling reveals system-wide modulation of protein-protein interactions.</title>
        <authorList>
            <person name="Mayya V."/>
            <person name="Lundgren D.H."/>
            <person name="Hwang S.-I."/>
            <person name="Rezaul K."/>
            <person name="Wu L."/>
            <person name="Eng J.K."/>
            <person name="Rodionov V."/>
            <person name="Han D.K."/>
        </authorList>
    </citation>
    <scope>PHOSPHORYLATION [LARGE SCALE ANALYSIS] AT SER-22; SER-41 AND SER-71</scope>
    <scope>IDENTIFICATION BY MASS SPECTROMETRY [LARGE SCALE ANALYSIS]</scope>
    <source>
        <tissue>Leukemic T-cell</tissue>
    </source>
</reference>
<reference key="12">
    <citation type="journal article" date="2010" name="Sci. Signal.">
        <title>Quantitative phosphoproteomics reveals widespread full phosphorylation site occupancy during mitosis.</title>
        <authorList>
            <person name="Olsen J.V."/>
            <person name="Vermeulen M."/>
            <person name="Santamaria A."/>
            <person name="Kumar C."/>
            <person name="Miller M.L."/>
            <person name="Jensen L.J."/>
            <person name="Gnad F."/>
            <person name="Cox J."/>
            <person name="Jensen T.S."/>
            <person name="Nigg E.A."/>
            <person name="Brunak S."/>
            <person name="Mann M."/>
        </authorList>
    </citation>
    <scope>PHOSPHORYLATION [LARGE SCALE ANALYSIS] AT SER-22; SER-101 AND SER-104</scope>
    <scope>IDENTIFICATION BY MASS SPECTROMETRY [LARGE SCALE ANALYSIS]</scope>
    <source>
        <tissue>Cervix carcinoma</tissue>
    </source>
</reference>
<reference key="13">
    <citation type="journal article" date="2011" name="BMC Syst. Biol.">
        <title>Initial characterization of the human central proteome.</title>
        <authorList>
            <person name="Burkard T.R."/>
            <person name="Planyavsky M."/>
            <person name="Kaupe I."/>
            <person name="Breitwieser F.P."/>
            <person name="Buerckstuemmer T."/>
            <person name="Bennett K.L."/>
            <person name="Superti-Furga G."/>
            <person name="Colinge J."/>
        </authorList>
    </citation>
    <scope>IDENTIFICATION BY MASS SPECTROMETRY [LARGE SCALE ANALYSIS]</scope>
</reference>
<reference key="14">
    <citation type="journal article" date="2011" name="Sci. Signal.">
        <title>System-wide temporal characterization of the proteome and phosphoproteome of human embryonic stem cell differentiation.</title>
        <authorList>
            <person name="Rigbolt K.T."/>
            <person name="Prokhorova T.A."/>
            <person name="Akimov V."/>
            <person name="Henningsen J."/>
            <person name="Johansen P.T."/>
            <person name="Kratchmarova I."/>
            <person name="Kassem M."/>
            <person name="Mann M."/>
            <person name="Olsen J.V."/>
            <person name="Blagoev B."/>
        </authorList>
    </citation>
    <scope>PHOSPHORYLATION [LARGE SCALE ANALYSIS] AT SER-22; SER-36; SER-41; SER-93; SER-101; SER-104; THR-148 AND SER-151</scope>
    <scope>IDENTIFICATION BY MASS SPECTROMETRY [LARGE SCALE ANALYSIS]</scope>
</reference>
<reference key="15">
    <citation type="journal article" date="2012" name="Mol. Cell. Biol.">
        <title>c-Jun N-terminal kinase phosphorylation of MARCKSL1 determines actin stability and migration in neurons and in cancer cells.</title>
        <authorList>
            <person name="Bjorkblom B."/>
            <person name="Padzik A."/>
            <person name="Mohammad H."/>
            <person name="Westerlund N."/>
            <person name="Komulainen E."/>
            <person name="Hollos P."/>
            <person name="Parviainen L."/>
            <person name="Papageorgiou A.C."/>
            <person name="Iljin K."/>
            <person name="Kallioniemi O."/>
            <person name="Kallajoki M."/>
            <person name="Courtney M.J."/>
            <person name="Magard M."/>
            <person name="James P."/>
            <person name="Coffey E.T."/>
        </authorList>
    </citation>
    <scope>FUNCTION</scope>
    <scope>SUBCELLULAR LOCATION</scope>
</reference>
<reference key="16">
    <citation type="journal article" date="2013" name="J. Proteome Res.">
        <title>Toward a comprehensive characterization of a human cancer cell phosphoproteome.</title>
        <authorList>
            <person name="Zhou H."/>
            <person name="Di Palma S."/>
            <person name="Preisinger C."/>
            <person name="Peng M."/>
            <person name="Polat A.N."/>
            <person name="Heck A.J."/>
            <person name="Mohammed S."/>
        </authorList>
    </citation>
    <scope>PHOSPHORYLATION [LARGE SCALE ANALYSIS] AT THR-14; SER-22; SER-36; SER-41; THR-85; SER-93; SER-101; SER-104; THR-148; SER-151 AND SER-165</scope>
    <scope>IDENTIFICATION BY MASS SPECTROMETRY [LARGE SCALE ANALYSIS]</scope>
    <source>
        <tissue>Cervix carcinoma</tissue>
        <tissue>Erythroleukemia</tissue>
    </source>
</reference>
<reference key="17">
    <citation type="journal article" date="2014" name="J. Proteomics">
        <title>An enzyme assisted RP-RPLC approach for in-depth analysis of human liver phosphoproteome.</title>
        <authorList>
            <person name="Bian Y."/>
            <person name="Song C."/>
            <person name="Cheng K."/>
            <person name="Dong M."/>
            <person name="Wang F."/>
            <person name="Huang J."/>
            <person name="Sun D."/>
            <person name="Wang L."/>
            <person name="Ye M."/>
            <person name="Zou H."/>
        </authorList>
    </citation>
    <scope>PHOSPHORYLATION [LARGE SCALE ANALYSIS] AT SER-104; SER-120; THR-148 AND THR-178</scope>
    <scope>IDENTIFICATION BY MASS SPECTROMETRY [LARGE SCALE ANALYSIS]</scope>
    <source>
        <tissue>Liver</tissue>
    </source>
</reference>
<reference key="18">
    <citation type="journal article" date="2014" name="Nat. Commun.">
        <title>Global profiling of co- and post-translationally N-myristoylated proteomes in human cells.</title>
        <authorList>
            <person name="Thinon E."/>
            <person name="Serwa R.A."/>
            <person name="Broncel M."/>
            <person name="Brannigan J.A."/>
            <person name="Brassat U."/>
            <person name="Wright M.H."/>
            <person name="Heal W.P."/>
            <person name="Wilkinson A.J."/>
            <person name="Mann D.J."/>
            <person name="Tate E.W."/>
        </authorList>
    </citation>
    <scope>SUBCELLULAR LOCATION</scope>
    <scope>MYRISTOYLATION AT GLY-2</scope>
    <scope>CLEAVAGE OF INITIATOR METHIONINE</scope>
    <scope>IDENTIFICATION BY MASS SPECTROMETRY</scope>
</reference>
<feature type="initiator methionine" description="Removed" evidence="5">
    <location>
        <position position="1"/>
    </location>
</feature>
<feature type="chain" id="PRO_0000157152" description="MARCKS-related protein">
    <location>
        <begin position="2"/>
        <end position="195"/>
    </location>
</feature>
<feature type="region of interest" description="Disordered" evidence="3">
    <location>
        <begin position="1"/>
        <end position="195"/>
    </location>
</feature>
<feature type="region of interest" description="Effector domain involved in lipid-binding and calmodulin-binding" evidence="2">
    <location>
        <begin position="87"/>
        <end position="110"/>
    </location>
</feature>
<feature type="compositionally biased region" description="Low complexity" evidence="3">
    <location>
        <begin position="16"/>
        <end position="26"/>
    </location>
</feature>
<feature type="compositionally biased region" description="Low complexity" evidence="3">
    <location>
        <begin position="53"/>
        <end position="64"/>
    </location>
</feature>
<feature type="compositionally biased region" description="Basic and acidic residues" evidence="3">
    <location>
        <begin position="76"/>
        <end position="85"/>
    </location>
</feature>
<feature type="compositionally biased region" description="Basic residues" evidence="3">
    <location>
        <begin position="86"/>
        <end position="98"/>
    </location>
</feature>
<feature type="compositionally biased region" description="Low complexity" evidence="3">
    <location>
        <begin position="153"/>
        <end position="195"/>
    </location>
</feature>
<feature type="modified residue" description="Phosphothreonine" evidence="15">
    <location>
        <position position="14"/>
    </location>
</feature>
<feature type="modified residue" description="Phosphoserine" evidence="9 11 12 13 14 15">
    <location>
        <position position="22"/>
    </location>
</feature>
<feature type="modified residue" description="Phosphoserine" evidence="14 15">
    <location>
        <position position="36"/>
    </location>
</feature>
<feature type="modified residue" description="Phosphoserine" evidence="12 14 15">
    <location>
        <position position="41"/>
    </location>
</feature>
<feature type="modified residue" description="Phosphoserine" evidence="2">
    <location>
        <position position="48"/>
    </location>
</feature>
<feature type="modified residue" description="Phosphoserine" evidence="10 12">
    <location>
        <position position="71"/>
    </location>
</feature>
<feature type="modified residue" description="Phosphothreonine" evidence="15">
    <location>
        <position position="85"/>
    </location>
</feature>
<feature type="modified residue" description="Phosphoserine" evidence="14 15">
    <location>
        <position position="93"/>
    </location>
</feature>
<feature type="modified residue" description="Phosphoserine" evidence="13 14 15">
    <location>
        <position position="101"/>
    </location>
</feature>
<feature type="modified residue" description="Phosphoserine" evidence="13 14 15 16">
    <location>
        <position position="104"/>
    </location>
</feature>
<feature type="modified residue" description="Phosphoserine" evidence="2">
    <location>
        <position position="119"/>
    </location>
</feature>
<feature type="modified residue" description="Phosphoserine" evidence="16">
    <location>
        <position position="120"/>
    </location>
</feature>
<feature type="modified residue" description="Phosphoserine" evidence="2">
    <location>
        <position position="135"/>
    </location>
</feature>
<feature type="modified residue" description="Phosphothreonine" evidence="11 14 15 16">
    <location>
        <position position="148"/>
    </location>
</feature>
<feature type="modified residue" description="Phosphoserine" evidence="14 15">
    <location>
        <position position="151"/>
    </location>
</feature>
<feature type="modified residue" description="Phosphoserine" evidence="2">
    <location>
        <position position="162"/>
    </location>
</feature>
<feature type="modified residue" description="Phosphoserine" evidence="15">
    <location>
        <position position="165"/>
    </location>
</feature>
<feature type="modified residue" description="Phosphothreonine" evidence="11 16">
    <location>
        <position position="178"/>
    </location>
</feature>
<feature type="modified residue" description="Phosphothreonine" evidence="2">
    <location>
        <position position="187"/>
    </location>
</feature>
<feature type="lipid moiety-binding region" description="N-myristoyl glycine" evidence="5">
    <location>
        <position position="2"/>
    </location>
</feature>
<feature type="sequence conflict" description="In Ref. 6; AAH66915." evidence="6" ref="6">
    <original>P</original>
    <variation>T</variation>
    <location>
        <position position="70"/>
    </location>
</feature>
<organism>
    <name type="scientific">Homo sapiens</name>
    <name type="common">Human</name>
    <dbReference type="NCBI Taxonomy" id="9606"/>
    <lineage>
        <taxon>Eukaryota</taxon>
        <taxon>Metazoa</taxon>
        <taxon>Chordata</taxon>
        <taxon>Craniata</taxon>
        <taxon>Vertebrata</taxon>
        <taxon>Euteleostomi</taxon>
        <taxon>Mammalia</taxon>
        <taxon>Eutheria</taxon>
        <taxon>Euarchontoglires</taxon>
        <taxon>Primates</taxon>
        <taxon>Haplorrhini</taxon>
        <taxon>Catarrhini</taxon>
        <taxon>Hominidae</taxon>
        <taxon>Homo</taxon>
    </lineage>
</organism>
<dbReference type="EMBL" id="X70326">
    <property type="protein sequence ID" value="CAA49793.1"/>
    <property type="molecule type" value="mRNA"/>
</dbReference>
<dbReference type="EMBL" id="AL109945">
    <property type="status" value="NOT_ANNOTATED_CDS"/>
    <property type="molecule type" value="Genomic_DNA"/>
</dbReference>
<dbReference type="EMBL" id="AY293577">
    <property type="protein sequence ID" value="AAP37955.1"/>
    <property type="molecule type" value="Genomic_DNA"/>
</dbReference>
<dbReference type="EMBL" id="AL713653">
    <property type="protein sequence ID" value="CAD28462.1"/>
    <property type="molecule type" value="mRNA"/>
</dbReference>
<dbReference type="EMBL" id="CH471059">
    <property type="protein sequence ID" value="EAX07538.1"/>
    <property type="molecule type" value="Genomic_DNA"/>
</dbReference>
<dbReference type="EMBL" id="CH471059">
    <property type="protein sequence ID" value="EAX07539.1"/>
    <property type="molecule type" value="Genomic_DNA"/>
</dbReference>
<dbReference type="EMBL" id="BC007904">
    <property type="protein sequence ID" value="AAH07904.1"/>
    <property type="molecule type" value="mRNA"/>
</dbReference>
<dbReference type="EMBL" id="BC066915">
    <property type="protein sequence ID" value="AAH66915.1"/>
    <property type="molecule type" value="mRNA"/>
</dbReference>
<dbReference type="CCDS" id="CCDS361.1"/>
<dbReference type="PIR" id="S31861">
    <property type="entry name" value="S31861"/>
</dbReference>
<dbReference type="RefSeq" id="NP_075385.1">
    <property type="nucleotide sequence ID" value="NM_023009.7"/>
</dbReference>
<dbReference type="BioGRID" id="122395">
    <property type="interactions" value="142"/>
</dbReference>
<dbReference type="CORUM" id="P49006"/>
<dbReference type="FunCoup" id="P49006">
    <property type="interactions" value="723"/>
</dbReference>
<dbReference type="IntAct" id="P49006">
    <property type="interactions" value="54"/>
</dbReference>
<dbReference type="MINT" id="P49006"/>
<dbReference type="STRING" id="9606.ENSP00000362638"/>
<dbReference type="GlyGen" id="P49006">
    <property type="glycosylation" value="3 sites, 1 N-linked glycan (1 site)"/>
</dbReference>
<dbReference type="iPTMnet" id="P49006"/>
<dbReference type="PhosphoSitePlus" id="P49006"/>
<dbReference type="SwissPalm" id="P49006"/>
<dbReference type="BioMuta" id="MARCKSL1"/>
<dbReference type="DMDM" id="1346576"/>
<dbReference type="jPOST" id="P49006"/>
<dbReference type="MassIVE" id="P49006"/>
<dbReference type="PaxDb" id="9606-ENSP00000362638"/>
<dbReference type="PeptideAtlas" id="P49006"/>
<dbReference type="ProteomicsDB" id="55955"/>
<dbReference type="Pumba" id="P49006"/>
<dbReference type="TopDownProteomics" id="P49006"/>
<dbReference type="Antibodypedia" id="31303">
    <property type="antibodies" value="240 antibodies from 34 providers"/>
</dbReference>
<dbReference type="DNASU" id="65108"/>
<dbReference type="Ensembl" id="ENST00000329421.8">
    <property type="protein sequence ID" value="ENSP00000362638.4"/>
    <property type="gene ID" value="ENSG00000175130.7"/>
</dbReference>
<dbReference type="GeneID" id="65108"/>
<dbReference type="KEGG" id="hsa:65108"/>
<dbReference type="MANE-Select" id="ENST00000329421.8">
    <property type="protein sequence ID" value="ENSP00000362638.4"/>
    <property type="RefSeq nucleotide sequence ID" value="NM_023009.7"/>
    <property type="RefSeq protein sequence ID" value="NP_075385.1"/>
</dbReference>
<dbReference type="UCSC" id="uc001bvd.5">
    <property type="organism name" value="human"/>
</dbReference>
<dbReference type="AGR" id="HGNC:7142"/>
<dbReference type="CTD" id="65108"/>
<dbReference type="DisGeNET" id="65108"/>
<dbReference type="GeneCards" id="MARCKSL1"/>
<dbReference type="HGNC" id="HGNC:7142">
    <property type="gene designation" value="MARCKSL1"/>
</dbReference>
<dbReference type="HPA" id="ENSG00000175130">
    <property type="expression patterns" value="Tissue enhanced (brain)"/>
</dbReference>
<dbReference type="MIM" id="602940">
    <property type="type" value="gene"/>
</dbReference>
<dbReference type="neXtProt" id="NX_P49006"/>
<dbReference type="OpenTargets" id="ENSG00000175130"/>
<dbReference type="PharmGKB" id="PA30857"/>
<dbReference type="VEuPathDB" id="HostDB:ENSG00000175130"/>
<dbReference type="eggNOG" id="ENOG502RYXK">
    <property type="taxonomic scope" value="Eukaryota"/>
</dbReference>
<dbReference type="GeneTree" id="ENSGT00730000111349"/>
<dbReference type="HOGENOM" id="CLU_073091_1_0_1"/>
<dbReference type="InParanoid" id="P49006"/>
<dbReference type="OMA" id="PPIMGSQ"/>
<dbReference type="OrthoDB" id="9948538at2759"/>
<dbReference type="PAN-GO" id="P49006">
    <property type="GO annotations" value="5 GO annotations based on evolutionary models"/>
</dbReference>
<dbReference type="PhylomeDB" id="P49006"/>
<dbReference type="TreeFam" id="TF332815"/>
<dbReference type="PathwayCommons" id="P49006"/>
<dbReference type="SignaLink" id="P49006"/>
<dbReference type="BioGRID-ORCS" id="65108">
    <property type="hits" value="20 hits in 1168 CRISPR screens"/>
</dbReference>
<dbReference type="CD-CODE" id="FB4E32DD">
    <property type="entry name" value="Presynaptic clusters and postsynaptic densities"/>
</dbReference>
<dbReference type="ChiTaRS" id="MARCKSL1">
    <property type="organism name" value="human"/>
</dbReference>
<dbReference type="GeneWiki" id="MARCKSL1"/>
<dbReference type="GenomeRNAi" id="65108"/>
<dbReference type="Pharos" id="P49006">
    <property type="development level" value="Tbio"/>
</dbReference>
<dbReference type="PRO" id="PR:P49006"/>
<dbReference type="Proteomes" id="UP000005640">
    <property type="component" value="Chromosome 1"/>
</dbReference>
<dbReference type="RNAct" id="P49006">
    <property type="molecule type" value="protein"/>
</dbReference>
<dbReference type="Bgee" id="ENSG00000175130">
    <property type="expression patterns" value="Expressed in inferior vagus X ganglion and 201 other cell types or tissues"/>
</dbReference>
<dbReference type="GO" id="GO:0005737">
    <property type="term" value="C:cytoplasm"/>
    <property type="evidence" value="ECO:0000318"/>
    <property type="project" value="GO_Central"/>
</dbReference>
<dbReference type="GO" id="GO:0005856">
    <property type="term" value="C:cytoskeleton"/>
    <property type="evidence" value="ECO:0007669"/>
    <property type="project" value="UniProtKB-SubCell"/>
</dbReference>
<dbReference type="GO" id="GO:0070062">
    <property type="term" value="C:extracellular exosome"/>
    <property type="evidence" value="ECO:0007005"/>
    <property type="project" value="UniProtKB"/>
</dbReference>
<dbReference type="GO" id="GO:0005886">
    <property type="term" value="C:plasma membrane"/>
    <property type="evidence" value="ECO:0000314"/>
    <property type="project" value="LIFEdb"/>
</dbReference>
<dbReference type="GO" id="GO:0051015">
    <property type="term" value="F:actin filament binding"/>
    <property type="evidence" value="ECO:0000318"/>
    <property type="project" value="GO_Central"/>
</dbReference>
<dbReference type="GO" id="GO:0005516">
    <property type="term" value="F:calmodulin binding"/>
    <property type="evidence" value="ECO:0007669"/>
    <property type="project" value="UniProtKB-KW"/>
</dbReference>
<dbReference type="GO" id="GO:0007015">
    <property type="term" value="P:actin filament organization"/>
    <property type="evidence" value="ECO:0000318"/>
    <property type="project" value="GO_Central"/>
</dbReference>
<dbReference type="GO" id="GO:0008283">
    <property type="term" value="P:cell population proliferation"/>
    <property type="evidence" value="ECO:0007669"/>
    <property type="project" value="Ensembl"/>
</dbReference>
<dbReference type="GO" id="GO:0007417">
    <property type="term" value="P:central nervous system development"/>
    <property type="evidence" value="ECO:0000318"/>
    <property type="project" value="GO_Central"/>
</dbReference>
<dbReference type="GO" id="GO:0008284">
    <property type="term" value="P:positive regulation of cell population proliferation"/>
    <property type="evidence" value="ECO:0007669"/>
    <property type="project" value="Ensembl"/>
</dbReference>
<dbReference type="InterPro" id="IPR002101">
    <property type="entry name" value="MARCKS"/>
</dbReference>
<dbReference type="PANTHER" id="PTHR14353:SF8">
    <property type="entry name" value="MARCKS-RELATED PROTEIN"/>
    <property type="match status" value="1"/>
</dbReference>
<dbReference type="PANTHER" id="PTHR14353">
    <property type="entry name" value="MYRISTOYLATED ALANINE-RICH C-KINASE SUBSTRATE MARCKS"/>
    <property type="match status" value="1"/>
</dbReference>
<dbReference type="Pfam" id="PF02063">
    <property type="entry name" value="MARCKS"/>
    <property type="match status" value="2"/>
</dbReference>
<dbReference type="PRINTS" id="PR00963">
    <property type="entry name" value="MARCKS"/>
</dbReference>
<dbReference type="PROSITE" id="PS00826">
    <property type="entry name" value="MARCKS_1"/>
    <property type="match status" value="1"/>
</dbReference>
<dbReference type="PROSITE" id="PS00827">
    <property type="entry name" value="MARCKS_2"/>
    <property type="match status" value="1"/>
</dbReference>
<keyword id="KW-0009">Actin-binding</keyword>
<keyword id="KW-0112">Calmodulin-binding</keyword>
<keyword id="KW-1003">Cell membrane</keyword>
<keyword id="KW-0963">Cytoplasm</keyword>
<keyword id="KW-0206">Cytoskeleton</keyword>
<keyword id="KW-0449">Lipoprotein</keyword>
<keyword id="KW-0472">Membrane</keyword>
<keyword id="KW-0519">Myristate</keyword>
<keyword id="KW-0597">Phosphoprotein</keyword>
<keyword id="KW-1267">Proteomics identification</keyword>
<keyword id="KW-1185">Reference proteome</keyword>
<sequence>MGSQSSKAPRGDVTAEEAAGASPAKANGQENGHVKSNGDLSPKGEGESPPVNGTDEAAGATGDAIEPAPPSQGAEAKGEVPPKETPKKKKKFSFKKPFKLSGLSFKRNRKEGGGDSSASSPTEEEQEQGEIGACSDEGTAQEGKAAATPESQEPQAKGAEASAASEEEAGPQATEPSTPSGPESGPTPASAEQNE</sequence>
<protein>
    <recommendedName>
        <fullName>MARCKS-related protein</fullName>
    </recommendedName>
    <alternativeName>
        <fullName>MARCKS-like protein 1</fullName>
    </alternativeName>
    <alternativeName>
        <fullName>Macrophage myristoylated alanine-rich C kinase substrate</fullName>
        <shortName>Mac-MARCKS</shortName>
        <shortName>MacMARCKS</shortName>
    </alternativeName>
</protein>
<comment type="function">
    <text evidence="2 4">Controls cell movement by regulating actin cytoskeleton homeostasis and filopodium and lamellipodium formation (PubMed:22751924). When unphosphorylated, induces cell migration (By similarity). When phosphorylated by MAPK8, induces actin bundles formation and stabilization, thereby reducing actin plasticity, hence restricting cell movement, including neuronal migration (By similarity). May be involved in coupling the protein kinase C and calmodulin signal transduction systems (By similarity).</text>
</comment>
<comment type="subunit">
    <text evidence="1">Binds to filamentous actin (F-actin), but not to monomeric G-actin, independently of its phosphorylation status.</text>
</comment>
<comment type="interaction">
    <interactant intactId="EBI-4289961">
        <id>P49006</id>
    </interactant>
    <interactant intactId="EBI-7172227">
        <id>Q9Y4K0</id>
        <label>LOXL2</label>
    </interactant>
    <organismsDiffer>false</organismsDiffer>
    <experiments>4</experiments>
</comment>
<comment type="subcellular location">
    <subcellularLocation>
        <location evidence="2">Cytoplasm</location>
        <location evidence="2">Cytoskeleton</location>
    </subcellularLocation>
    <subcellularLocation>
        <location evidence="7 8">Cell membrane</location>
        <topology evidence="8">Lipid-anchor</topology>
    </subcellularLocation>
    <text evidence="2 4">Associates with the membrane via the insertion of the N-terminal N-myristoyl chain and the partial insertion of the effector domain. Association of the effector domain with membranes may be regulated by Ca(2+)/calmodulin. Colocalizes with F-actin at the leading edge of migrating cells (By similarity). In prostate cancers, shows strong expression at apical and/or basal regions of the cell and also has weak cytoplasmic expression (PubMed:22751924).</text>
</comment>
<comment type="PTM">
    <text evidence="2">Phosphorylated. Phosphorylation at Ser-120 and Thr-178 is non-redundantly catalyzed by MAPK8 in vivo. Phosphorylation at Thr-148 is preferentially catalyzed by MAPK8 in vivo, but this modification can also be catalyzed by other kinases in the absence of MAPK8. May be phosphorylated by protein kinase C, which disrupts the interaction with calmodulin.</text>
</comment>
<comment type="similarity">
    <text evidence="6">Belongs to the MARCKS family.</text>
</comment>
<proteinExistence type="evidence at protein level"/>